<comment type="function">
    <text evidence="2">Acts as a positive regulator of ERK phosphorylation downstream of fibroblast growth factor-receptor activation. Involved in the regulation of both caspase-dependent apoptosis and caspase-independent cell death. In the skin, it plays a predominant role in suppressing caspase-dependent apoptosis in response to UV stress in a range of dermal cell types.</text>
</comment>
<comment type="catalytic activity">
    <reaction>
        <text>L-seryl-[protein] + ATP = O-phospho-L-seryl-[protein] + ADP + H(+)</text>
        <dbReference type="Rhea" id="RHEA:17989"/>
        <dbReference type="Rhea" id="RHEA-COMP:9863"/>
        <dbReference type="Rhea" id="RHEA-COMP:11604"/>
        <dbReference type="ChEBI" id="CHEBI:15378"/>
        <dbReference type="ChEBI" id="CHEBI:29999"/>
        <dbReference type="ChEBI" id="CHEBI:30616"/>
        <dbReference type="ChEBI" id="CHEBI:83421"/>
        <dbReference type="ChEBI" id="CHEBI:456216"/>
        <dbReference type="EC" id="2.7.12.1"/>
    </reaction>
</comment>
<comment type="catalytic activity">
    <reaction>
        <text>L-threonyl-[protein] + ATP = O-phospho-L-threonyl-[protein] + ADP + H(+)</text>
        <dbReference type="Rhea" id="RHEA:46608"/>
        <dbReference type="Rhea" id="RHEA-COMP:11060"/>
        <dbReference type="Rhea" id="RHEA-COMP:11605"/>
        <dbReference type="ChEBI" id="CHEBI:15378"/>
        <dbReference type="ChEBI" id="CHEBI:30013"/>
        <dbReference type="ChEBI" id="CHEBI:30616"/>
        <dbReference type="ChEBI" id="CHEBI:61977"/>
        <dbReference type="ChEBI" id="CHEBI:456216"/>
        <dbReference type="EC" id="2.7.12.1"/>
    </reaction>
</comment>
<comment type="catalytic activity">
    <reaction>
        <text>L-tyrosyl-[protein] + ATP = O-phospho-L-tyrosyl-[protein] + ADP + H(+)</text>
        <dbReference type="Rhea" id="RHEA:10596"/>
        <dbReference type="Rhea" id="RHEA-COMP:10136"/>
        <dbReference type="Rhea" id="RHEA-COMP:20101"/>
        <dbReference type="ChEBI" id="CHEBI:15378"/>
        <dbReference type="ChEBI" id="CHEBI:30616"/>
        <dbReference type="ChEBI" id="CHEBI:46858"/>
        <dbReference type="ChEBI" id="CHEBI:61978"/>
        <dbReference type="ChEBI" id="CHEBI:456216"/>
        <dbReference type="EC" id="2.7.12.1"/>
    </reaction>
</comment>
<comment type="subcellular location">
    <subcellularLocation>
        <location evidence="1">Cytoplasm</location>
    </subcellularLocation>
    <subcellularLocation>
        <location evidence="1">Cell membrane</location>
    </subcellularLocation>
    <subcellularLocation>
        <location evidence="1">Apical cell membrane</location>
    </subcellularLocation>
    <subcellularLocation>
        <location evidence="1">Basolateral cell membrane</location>
    </subcellularLocation>
    <subcellularLocation>
        <location evidence="1">Cell junction</location>
    </subcellularLocation>
    <text evidence="1">Detected in basolateral and apical membranes of all tubular epithelia. Detected at apical cell-cell junctions. Colocalized with FGF receptors to the cell membrane.</text>
</comment>
<comment type="similarity">
    <text evidence="4">Belongs to the protein kinase superfamily. Ser/Thr protein kinase family.</text>
</comment>
<organism>
    <name type="scientific">Pan troglodytes</name>
    <name type="common">Chimpanzee</name>
    <dbReference type="NCBI Taxonomy" id="9598"/>
    <lineage>
        <taxon>Eukaryota</taxon>
        <taxon>Metazoa</taxon>
        <taxon>Chordata</taxon>
        <taxon>Craniata</taxon>
        <taxon>Vertebrata</taxon>
        <taxon>Euteleostomi</taxon>
        <taxon>Mammalia</taxon>
        <taxon>Eutheria</taxon>
        <taxon>Euarchontoglires</taxon>
        <taxon>Primates</taxon>
        <taxon>Haplorrhini</taxon>
        <taxon>Catarrhini</taxon>
        <taxon>Hominidae</taxon>
        <taxon>Pan</taxon>
    </lineage>
</organism>
<dbReference type="EC" id="2.7.12.1"/>
<dbReference type="EMBL" id="AY641092">
    <property type="protein sequence ID" value="AAV40858.1"/>
    <property type="molecule type" value="mRNA"/>
</dbReference>
<dbReference type="RefSeq" id="NP_001029338.1">
    <property type="nucleotide sequence ID" value="NM_001034166.1"/>
</dbReference>
<dbReference type="SMR" id="Q4VSN5"/>
<dbReference type="FunCoup" id="Q4VSN5">
    <property type="interactions" value="1189"/>
</dbReference>
<dbReference type="STRING" id="9598.ENSPTRP00000003173"/>
<dbReference type="PaxDb" id="9598-ENSPTRP00000003173"/>
<dbReference type="Ensembl" id="ENSPTRT00000003448.5">
    <property type="protein sequence ID" value="ENSPTRP00000003173.4"/>
    <property type="gene ID" value="ENSPTRG00000001895.6"/>
</dbReference>
<dbReference type="GeneID" id="457666"/>
<dbReference type="KEGG" id="ptr:457666"/>
<dbReference type="CTD" id="25778"/>
<dbReference type="VGNC" id="VGNC:6785">
    <property type="gene designation" value="DSTYK"/>
</dbReference>
<dbReference type="eggNOG" id="KOG0192">
    <property type="taxonomic scope" value="Eukaryota"/>
</dbReference>
<dbReference type="GeneTree" id="ENSGT00840000129948"/>
<dbReference type="HOGENOM" id="CLU_014116_0_0_1"/>
<dbReference type="InParanoid" id="Q4VSN5"/>
<dbReference type="OMA" id="VTRMVWE"/>
<dbReference type="OrthoDB" id="6927at9604"/>
<dbReference type="TreeFam" id="TF331821"/>
<dbReference type="Proteomes" id="UP000002277">
    <property type="component" value="Chromosome 1"/>
</dbReference>
<dbReference type="Bgee" id="ENSPTRG00000001895">
    <property type="expression patterns" value="Expressed in bone marrow and 21 other cell types or tissues"/>
</dbReference>
<dbReference type="GO" id="GO:0070161">
    <property type="term" value="C:anchoring junction"/>
    <property type="evidence" value="ECO:0007669"/>
    <property type="project" value="UniProtKB-SubCell"/>
</dbReference>
<dbReference type="GO" id="GO:0016324">
    <property type="term" value="C:apical plasma membrane"/>
    <property type="evidence" value="ECO:0000250"/>
    <property type="project" value="UniProtKB"/>
</dbReference>
<dbReference type="GO" id="GO:0016323">
    <property type="term" value="C:basolateral plasma membrane"/>
    <property type="evidence" value="ECO:0000250"/>
    <property type="project" value="UniProtKB"/>
</dbReference>
<dbReference type="GO" id="GO:0005737">
    <property type="term" value="C:cytoplasm"/>
    <property type="evidence" value="ECO:0000250"/>
    <property type="project" value="UniProtKB"/>
</dbReference>
<dbReference type="GO" id="GO:0005524">
    <property type="term" value="F:ATP binding"/>
    <property type="evidence" value="ECO:0007669"/>
    <property type="project" value="UniProtKB-KW"/>
</dbReference>
<dbReference type="GO" id="GO:0106310">
    <property type="term" value="F:protein serine kinase activity"/>
    <property type="evidence" value="ECO:0007669"/>
    <property type="project" value="RHEA"/>
</dbReference>
<dbReference type="GO" id="GO:0004674">
    <property type="term" value="F:protein serine/threonine kinase activity"/>
    <property type="evidence" value="ECO:0007669"/>
    <property type="project" value="UniProtKB-KW"/>
</dbReference>
<dbReference type="GO" id="GO:0004712">
    <property type="term" value="F:protein serine/threonine/tyrosine kinase activity"/>
    <property type="evidence" value="ECO:0007669"/>
    <property type="project" value="UniProtKB-EC"/>
</dbReference>
<dbReference type="GO" id="GO:0004713">
    <property type="term" value="F:protein tyrosine kinase activity"/>
    <property type="evidence" value="ECO:0007669"/>
    <property type="project" value="UniProtKB-KW"/>
</dbReference>
<dbReference type="GO" id="GO:0044344">
    <property type="term" value="P:cellular response to fibroblast growth factor stimulus"/>
    <property type="evidence" value="ECO:0000250"/>
    <property type="project" value="UniProtKB"/>
</dbReference>
<dbReference type="GO" id="GO:0043066">
    <property type="term" value="P:negative regulation of apoptotic process"/>
    <property type="evidence" value="ECO:0000250"/>
    <property type="project" value="UniProtKB"/>
</dbReference>
<dbReference type="GO" id="GO:0070374">
    <property type="term" value="P:positive regulation of ERK1 and ERK2 cascade"/>
    <property type="evidence" value="ECO:0000250"/>
    <property type="project" value="UniProtKB"/>
</dbReference>
<dbReference type="GO" id="GO:0045743">
    <property type="term" value="P:positive regulation of fibroblast growth factor receptor signaling pathway"/>
    <property type="evidence" value="ECO:0000250"/>
    <property type="project" value="UniProtKB"/>
</dbReference>
<dbReference type="GO" id="GO:0033674">
    <property type="term" value="P:positive regulation of kinase activity"/>
    <property type="evidence" value="ECO:0000250"/>
    <property type="project" value="UniProtKB"/>
</dbReference>
<dbReference type="CDD" id="cd13975">
    <property type="entry name" value="PKc_Dusty"/>
    <property type="match status" value="1"/>
</dbReference>
<dbReference type="FunFam" id="1.10.510.10:FF:000244">
    <property type="entry name" value="Dual serine/threonine and tyrosine protein kinase"/>
    <property type="match status" value="1"/>
</dbReference>
<dbReference type="Gene3D" id="1.10.510.10">
    <property type="entry name" value="Transferase(Phosphotransferase) domain 1"/>
    <property type="match status" value="1"/>
</dbReference>
<dbReference type="InterPro" id="IPR051302">
    <property type="entry name" value="Dual_SerThr-Tyr_Kinase"/>
</dbReference>
<dbReference type="InterPro" id="IPR011009">
    <property type="entry name" value="Kinase-like_dom_sf"/>
</dbReference>
<dbReference type="InterPro" id="IPR000719">
    <property type="entry name" value="Prot_kinase_dom"/>
</dbReference>
<dbReference type="InterPro" id="IPR017441">
    <property type="entry name" value="Protein_kinase_ATP_BS"/>
</dbReference>
<dbReference type="InterPro" id="IPR008271">
    <property type="entry name" value="Ser/Thr_kinase_AS"/>
</dbReference>
<dbReference type="PANTHER" id="PTHR46392">
    <property type="entry name" value="DUAL SERINE/THREONINE AND TYROSINE PROTEIN KINASE"/>
    <property type="match status" value="1"/>
</dbReference>
<dbReference type="PANTHER" id="PTHR46392:SF1">
    <property type="entry name" value="DUAL SERINE_THREONINE AND TYROSINE PROTEIN KINASE"/>
    <property type="match status" value="1"/>
</dbReference>
<dbReference type="Pfam" id="PF00069">
    <property type="entry name" value="Pkinase"/>
    <property type="match status" value="1"/>
</dbReference>
<dbReference type="SMART" id="SM00220">
    <property type="entry name" value="S_TKc"/>
    <property type="match status" value="1"/>
</dbReference>
<dbReference type="SUPFAM" id="SSF56112">
    <property type="entry name" value="Protein kinase-like (PK-like)"/>
    <property type="match status" value="1"/>
</dbReference>
<dbReference type="PROSITE" id="PS00107">
    <property type="entry name" value="PROTEIN_KINASE_ATP"/>
    <property type="match status" value="1"/>
</dbReference>
<dbReference type="PROSITE" id="PS50011">
    <property type="entry name" value="PROTEIN_KINASE_DOM"/>
    <property type="match status" value="1"/>
</dbReference>
<dbReference type="PROSITE" id="PS00108">
    <property type="entry name" value="PROTEIN_KINASE_ST"/>
    <property type="match status" value="1"/>
</dbReference>
<accession>Q4VSN5</accession>
<feature type="chain" id="PRO_0000233120" description="Dual serine/threonine and tyrosine protein kinase">
    <location>
        <begin position="1"/>
        <end position="930"/>
    </location>
</feature>
<feature type="domain" description="Protein kinase" evidence="4">
    <location>
        <begin position="653"/>
        <end position="907"/>
    </location>
</feature>
<feature type="region of interest" description="Disordered" evidence="6">
    <location>
        <begin position="1"/>
        <end position="22"/>
    </location>
</feature>
<feature type="coiled-coil region" evidence="3">
    <location>
        <begin position="190"/>
        <end position="216"/>
    </location>
</feature>
<feature type="coiled-coil region" evidence="3">
    <location>
        <begin position="396"/>
        <end position="432"/>
    </location>
</feature>
<feature type="compositionally biased region" description="Low complexity" evidence="6">
    <location>
        <begin position="1"/>
        <end position="14"/>
    </location>
</feature>
<feature type="active site" description="Proton acceptor" evidence="4 5">
    <location>
        <position position="778"/>
    </location>
</feature>
<feature type="binding site" evidence="4">
    <location>
        <begin position="659"/>
        <end position="667"/>
    </location>
    <ligand>
        <name>ATP</name>
        <dbReference type="ChEBI" id="CHEBI:30616"/>
    </ligand>
</feature>
<feature type="binding site" evidence="4">
    <location>
        <position position="682"/>
    </location>
    <ligand>
        <name>ATP</name>
        <dbReference type="ChEBI" id="CHEBI:30616"/>
    </ligand>
</feature>
<sequence length="930" mass="105305">MEGDGVPWGSEPVSGPGPGGGGGMIRELCRGFGRYRRYLGRLRQNLRETQKFFRDIKCSHNHTCLSSLTGGGGAERGPAGDVAETGLQAGQLSCISFPPKEEKYLQQIVDCLPCILILGQDCNVKCQLLNLLLGVQVLPTTKLGSEESCKLRRLRFTYGTQTRVSLALPGQYELVHTLVAHQGNWETIPEEDLEVQENNEDAAHVLAELEVTMHHALLQEVDVVVAPCQGLRPTVDVLGDLVNDFLPVITYALHKDELSERDEQELQEIRKYFSFPVFFFKVPKLGSEIIDSSTKRMESERSLLYRQLIDLGYLSSSHWNCGAPGQDTKAQSMLVEQSEKLRHLSTFSHQVLQTRLVDAAKALNLVHCHCLDIFINQAFDMQRDLQITPKRLEYTRKKENELYESLMNIANRKQEEMKDMIVETLNTMKEELLDDATNMEFKDVIVPENGEPVGTREIKCCIRQIQELIISRLNQAVANKLISSVDYLRESFVGTLERCLQSLEKSQDVSVHITSNYLKQILNAAYHVEVTFHSGSSVTRMLWEQIKQIIQRITWVSPPAITLEWKRKVAQEAIESLSASKLAKSICSQFRTRLNSSHEAFAASLRQLEAGHSGRLEKTEDLWLRVRKDHAPRLARLSLESRSLQDVLLHRKPKLGQELGRGQYGVVYLCDNWGGHFPCALKSVVPPDEKHWNDLALEFHYMRSLPKHERLVDLHGSVIDYNYGGGSSIAVLLIMERLHRDLYTGLKAGLTLETRLQIALDVVEGIRFLHSQGLVHRDIKLKNVLLDKQNRAKITDLGFCKPEAMMSGSIVGTPIHMAPELFTGKYDNSVDVYAFGILFWYICSGSVKLPEAFERCASKDHLWNNVRRGARPERLPVFDEECWQLMEACWDGDPLKRPLLGIVQPMLQGIMDRLCKSNSEQPNRGLDDST</sequence>
<name>DUSTY_PANTR</name>
<keyword id="KW-0067">ATP-binding</keyword>
<keyword id="KW-0965">Cell junction</keyword>
<keyword id="KW-1003">Cell membrane</keyword>
<keyword id="KW-0175">Coiled coil</keyword>
<keyword id="KW-0963">Cytoplasm</keyword>
<keyword id="KW-0418">Kinase</keyword>
<keyword id="KW-0472">Membrane</keyword>
<keyword id="KW-0547">Nucleotide-binding</keyword>
<keyword id="KW-1185">Reference proteome</keyword>
<keyword id="KW-0723">Serine/threonine-protein kinase</keyword>
<keyword id="KW-0808">Transferase</keyword>
<keyword id="KW-0829">Tyrosine-protein kinase</keyword>
<gene>
    <name type="primary">DSTYK</name>
    <name type="synonym">RIPK5</name>
</gene>
<evidence type="ECO:0000250" key="1">
    <source>
        <dbReference type="UniProtKB" id="Q6XUX1"/>
    </source>
</evidence>
<evidence type="ECO:0000250" key="2">
    <source>
        <dbReference type="UniProtKB" id="Q6XUX3"/>
    </source>
</evidence>
<evidence type="ECO:0000255" key="3"/>
<evidence type="ECO:0000255" key="4">
    <source>
        <dbReference type="PROSITE-ProRule" id="PRU00159"/>
    </source>
</evidence>
<evidence type="ECO:0000255" key="5">
    <source>
        <dbReference type="PROSITE-ProRule" id="PRU10027"/>
    </source>
</evidence>
<evidence type="ECO:0000256" key="6">
    <source>
        <dbReference type="SAM" id="MobiDB-lite"/>
    </source>
</evidence>
<protein>
    <recommendedName>
        <fullName>Dual serine/threonine and tyrosine protein kinase</fullName>
        <ecNumber>2.7.12.1</ecNumber>
    </recommendedName>
    <alternativeName>
        <fullName>Dusty protein kinase</fullName>
        <shortName>Dusty PK</shortName>
    </alternativeName>
    <alternativeName>
        <fullName>Receptor-interacting serine/threonine-protein kinase 5</fullName>
    </alternativeName>
</protein>
<reference key="1">
    <citation type="journal article" date="2006" name="Biochim. Biophys. Acta">
        <title>Dusty protein kinases: primary structure, gene evolution, tissue specific expression and unique features of the catalytic domain.</title>
        <authorList>
            <person name="Peng J."/>
            <person name="Dong W."/>
            <person name="Chen Y."/>
            <person name="Mo R."/>
            <person name="Cheng J.-F."/>
            <person name="Hui C.-C."/>
            <person name="Mohandas N."/>
            <person name="Huang C.-H."/>
        </authorList>
    </citation>
    <scope>NUCLEOTIDE SEQUENCE [MRNA]</scope>
</reference>
<proteinExistence type="evidence at transcript level"/>